<evidence type="ECO:0000250" key="1"/>
<evidence type="ECO:0000250" key="2">
    <source>
        <dbReference type="UniProtKB" id="P97829"/>
    </source>
</evidence>
<evidence type="ECO:0000250" key="3">
    <source>
        <dbReference type="UniProtKB" id="Q08722"/>
    </source>
</evidence>
<evidence type="ECO:0000250" key="4">
    <source>
        <dbReference type="UniProtKB" id="Q61735"/>
    </source>
</evidence>
<evidence type="ECO:0000255" key="5"/>
<evidence type="ECO:0000255" key="6">
    <source>
        <dbReference type="PROSITE-ProRule" id="PRU00114"/>
    </source>
</evidence>
<evidence type="ECO:0000305" key="7"/>
<accession>Q9N0K1</accession>
<sequence>MWPLVVVLLLGSVRCGSAQLIFNAIKSVEYTLCNQTVVIPCFVNNVETKNITELYVRWKFKGENIFIFDGSQRMSKPSSNFSSAEIAPSELLRGIASLKMAKSDAVLGNYTCEVTELSREGETIIELKYRVVSWFSPNENILIVIFPVLAILLFWGQFGIVTLKYKSNYTKEKAIFLLVAGLLLTVLVIVGAFLFIPGGYSTKNASGLGLIVLPTIILILLHYCVFMIAMGMSSFTISILILQLLGYVLSVVGFSLCVSECIPVHGPLLISGLGIIALAELLGLVYMKCVASNHRTIQPPRNN</sequence>
<name>CD47_BOVIN</name>
<protein>
    <recommendedName>
        <fullName>Leukocyte surface antigen CD47</fullName>
    </recommendedName>
    <alternativeName>
        <fullName>Integrin-associated protein</fullName>
        <shortName>IAP</shortName>
    </alternativeName>
    <cdAntigenName>CD47</cdAntigenName>
</protein>
<keyword id="KW-0130">Cell adhesion</keyword>
<keyword id="KW-1003">Cell membrane</keyword>
<keyword id="KW-1015">Disulfide bond</keyword>
<keyword id="KW-0325">Glycoprotein</keyword>
<keyword id="KW-0393">Immunoglobulin domain</keyword>
<keyword id="KW-0472">Membrane</keyword>
<keyword id="KW-0597">Phosphoprotein</keyword>
<keyword id="KW-0873">Pyrrolidone carboxylic acid</keyword>
<keyword id="KW-1185">Reference proteome</keyword>
<keyword id="KW-0732">Signal</keyword>
<keyword id="KW-0812">Transmembrane</keyword>
<keyword id="KW-1133">Transmembrane helix</keyword>
<proteinExistence type="evidence at transcript level"/>
<comment type="function">
    <text evidence="2 3 4">Adhesive protein that mediates cell-to-cell interactions. Acts as a receptor for thrombospondin THBS1 and as modulator of integrin signaling through the activation of heterotrimeric G proteins. Involved in signal transduction, cardiovascular homeostasis, inflammation, apoptosis, angiogenesis, cellular self-renewal, and immunoregulation. Plays a role in modulating pulmonary endothelin EDN1 signaling (By similarity). Modulates nitrous oxide (NO) signaling, in response to THBS1, hence playing a role as a pressor agent, supporting blood pressure (By similarity). Plays an important role in memory formation and synaptic plasticity in the hippocampus (By similarity). Receptor for SIRPA, binding to which prevents maturation of immature dendritic cells and inhibits cytokine production by mature dendritic cells. Interaction with SIRPG mediates cell-cell adhesion, enhances superantigen-dependent T-cell-mediated proliferation and costimulates T-cell activation (By similarity). Positively modulates FAS-dependent apoptosis in T-cells, perhaps by enhancing FAS clustering (By similarity). Plays a role in suppressing angiogenesis and may be involved in metabolic dysregulation during normal aging (By similarity). In response to THBS1, negatively modulates wound healing. Inhibits stem cell self-renewal, in response to THBS1, probably by regulation of the stem cell transcription factors POU5F1/OCT4, SOX2, MYC/c-Myc and KLF4 (By similarity). May play a role in membrane transport and/or integrin dependent signal transduction (By similarity). May prevent premature elimination of red blood cells (By similarity).</text>
</comment>
<comment type="subunit">
    <text evidence="3">Monomer. Interacts with THBS1 (via the C-terminal domain). Interacts with SIRPA. Interacts with FAS/CD95; interaction may be enhanced by functional activation. Interacts with SIRPG, UBQLN1 and UBQLN2. May interact with fibrinogen.</text>
</comment>
<comment type="subcellular location">
    <subcellularLocation>
        <location evidence="1">Cell membrane</location>
        <topology evidence="1">Multi-pass membrane protein</topology>
    </subcellularLocation>
</comment>
<organism>
    <name type="scientific">Bos taurus</name>
    <name type="common">Bovine</name>
    <dbReference type="NCBI Taxonomy" id="9913"/>
    <lineage>
        <taxon>Eukaryota</taxon>
        <taxon>Metazoa</taxon>
        <taxon>Chordata</taxon>
        <taxon>Craniata</taxon>
        <taxon>Vertebrata</taxon>
        <taxon>Euteleostomi</taxon>
        <taxon>Mammalia</taxon>
        <taxon>Eutheria</taxon>
        <taxon>Laurasiatheria</taxon>
        <taxon>Artiodactyla</taxon>
        <taxon>Ruminantia</taxon>
        <taxon>Pecora</taxon>
        <taxon>Bovidae</taxon>
        <taxon>Bovinae</taxon>
        <taxon>Bos</taxon>
    </lineage>
</organism>
<reference key="1">
    <citation type="submission" date="1999-09" db="EMBL/GenBank/DDBJ databases">
        <title>Cloning and distribution of cattle CD47.</title>
        <authorList>
            <person name="Brooke G.P."/>
            <person name="Howard C.J."/>
        </authorList>
    </citation>
    <scope>NUCLEOTIDE SEQUENCE [MRNA]</scope>
    <source>
        <tissue>Monocyte</tissue>
    </source>
</reference>
<feature type="signal peptide" evidence="5">
    <location>
        <begin position="1"/>
        <end position="18"/>
    </location>
</feature>
<feature type="chain" id="PRO_0000042205" description="Leukocyte surface antigen CD47">
    <location>
        <begin position="19"/>
        <end position="303"/>
    </location>
</feature>
<feature type="topological domain" description="Extracellular" evidence="5">
    <location>
        <begin position="19"/>
        <end position="140"/>
    </location>
</feature>
<feature type="transmembrane region" description="Helical" evidence="5">
    <location>
        <begin position="141"/>
        <end position="161"/>
    </location>
</feature>
<feature type="topological domain" description="Cytoplasmic" evidence="5">
    <location>
        <begin position="162"/>
        <end position="174"/>
    </location>
</feature>
<feature type="transmembrane region" description="Helical" evidence="5">
    <location>
        <begin position="175"/>
        <end position="195"/>
    </location>
</feature>
<feature type="topological domain" description="Extracellular" evidence="5">
    <location>
        <begin position="196"/>
        <end position="207"/>
    </location>
</feature>
<feature type="transmembrane region" description="Helical" evidence="5">
    <location>
        <begin position="208"/>
        <end position="228"/>
    </location>
</feature>
<feature type="topological domain" description="Cytoplasmic" evidence="5">
    <location>
        <begin position="229"/>
        <end position="236"/>
    </location>
</feature>
<feature type="transmembrane region" description="Helical" evidence="5">
    <location>
        <begin position="237"/>
        <end position="257"/>
    </location>
</feature>
<feature type="topological domain" description="Extracellular" evidence="5">
    <location>
        <begin position="258"/>
        <end position="266"/>
    </location>
</feature>
<feature type="transmembrane region" description="Helical" evidence="5">
    <location>
        <begin position="267"/>
        <end position="287"/>
    </location>
</feature>
<feature type="topological domain" description="Cytoplasmic" evidence="5">
    <location>
        <begin position="288"/>
        <end position="303"/>
    </location>
</feature>
<feature type="domain" description="Ig-like V-type">
    <location>
        <begin position="19"/>
        <end position="125"/>
    </location>
</feature>
<feature type="modified residue" description="Pyrrolidone carboxylic acid" evidence="3 7">
    <location>
        <position position="19"/>
    </location>
</feature>
<feature type="modified residue" description="Phosphoserine" evidence="2">
    <location>
        <position position="89"/>
    </location>
</feature>
<feature type="glycosylation site" description="N-linked (GlcNAc...) asparagine" evidence="5">
    <location>
        <position position="34"/>
    </location>
</feature>
<feature type="glycosylation site" description="N-linked (GlcNAc...) asparagine" evidence="5">
    <location>
        <position position="50"/>
    </location>
</feature>
<feature type="glycosylation site" description="N-linked (GlcNAc...) asparagine" evidence="5">
    <location>
        <position position="109"/>
    </location>
</feature>
<feature type="glycosylation site" description="N-linked (GlcNAc...) asparagine" evidence="5">
    <location>
        <position position="204"/>
    </location>
</feature>
<feature type="disulfide bond" evidence="6">
    <location>
        <begin position="33"/>
        <end position="261"/>
    </location>
</feature>
<feature type="disulfide bond" evidence="6">
    <location>
        <begin position="41"/>
        <end position="112"/>
    </location>
</feature>
<gene>
    <name type="primary">CD47</name>
</gene>
<dbReference type="EMBL" id="AJ245943">
    <property type="protein sequence ID" value="CAB76905.1"/>
    <property type="molecule type" value="mRNA"/>
</dbReference>
<dbReference type="EMBL" id="AJ291474">
    <property type="protein sequence ID" value="CAC13139.1"/>
    <property type="molecule type" value="mRNA"/>
</dbReference>
<dbReference type="SMR" id="Q9N0K1"/>
<dbReference type="FunCoup" id="Q9N0K1">
    <property type="interactions" value="666"/>
</dbReference>
<dbReference type="STRING" id="9913.ENSBTAP00000073129"/>
<dbReference type="GlyCosmos" id="Q9N0K1">
    <property type="glycosylation" value="4 sites, No reported glycans"/>
</dbReference>
<dbReference type="GlyGen" id="Q9N0K1">
    <property type="glycosylation" value="4 sites"/>
</dbReference>
<dbReference type="PaxDb" id="9913-ENSBTAP00000048646"/>
<dbReference type="eggNOG" id="ENOG502RYTQ">
    <property type="taxonomic scope" value="Eukaryota"/>
</dbReference>
<dbReference type="InParanoid" id="Q9N0K1"/>
<dbReference type="OrthoDB" id="9447188at2759"/>
<dbReference type="Proteomes" id="UP000009136">
    <property type="component" value="Unplaced"/>
</dbReference>
<dbReference type="GO" id="GO:0070062">
    <property type="term" value="C:extracellular exosome"/>
    <property type="evidence" value="ECO:0000318"/>
    <property type="project" value="GO_Central"/>
</dbReference>
<dbReference type="GO" id="GO:0005886">
    <property type="term" value="C:plasma membrane"/>
    <property type="evidence" value="ECO:0000318"/>
    <property type="project" value="GO_Central"/>
</dbReference>
<dbReference type="GO" id="GO:0070053">
    <property type="term" value="F:thrombospondin receptor activity"/>
    <property type="evidence" value="ECO:0000318"/>
    <property type="project" value="GO_Central"/>
</dbReference>
<dbReference type="GO" id="GO:0007155">
    <property type="term" value="P:cell adhesion"/>
    <property type="evidence" value="ECO:0007669"/>
    <property type="project" value="UniProtKB-KW"/>
</dbReference>
<dbReference type="GO" id="GO:0022409">
    <property type="term" value="P:positive regulation of cell-cell adhesion"/>
    <property type="evidence" value="ECO:0000318"/>
    <property type="project" value="GO_Central"/>
</dbReference>
<dbReference type="GO" id="GO:0050729">
    <property type="term" value="P:positive regulation of inflammatory response"/>
    <property type="evidence" value="ECO:0000318"/>
    <property type="project" value="GO_Central"/>
</dbReference>
<dbReference type="GO" id="GO:0050766">
    <property type="term" value="P:positive regulation of phagocytosis"/>
    <property type="evidence" value="ECO:0000318"/>
    <property type="project" value="GO_Central"/>
</dbReference>
<dbReference type="CDD" id="cd16090">
    <property type="entry name" value="IgV_CD47"/>
    <property type="match status" value="1"/>
</dbReference>
<dbReference type="FunFam" id="2.60.40.10:FF:000521">
    <property type="entry name" value="leukocyte surface antigen CD47"/>
    <property type="match status" value="1"/>
</dbReference>
<dbReference type="Gene3D" id="2.60.40.10">
    <property type="entry name" value="Immunoglobulins"/>
    <property type="match status" value="1"/>
</dbReference>
<dbReference type="InterPro" id="IPR006704">
    <property type="entry name" value="CD47"/>
</dbReference>
<dbReference type="InterPro" id="IPR013147">
    <property type="entry name" value="CD47-like_TM"/>
</dbReference>
<dbReference type="InterPro" id="IPR013270">
    <property type="entry name" value="CD47_Vset"/>
</dbReference>
<dbReference type="InterPro" id="IPR007110">
    <property type="entry name" value="Ig-like_dom"/>
</dbReference>
<dbReference type="InterPro" id="IPR013783">
    <property type="entry name" value="Ig-like_fold"/>
</dbReference>
<dbReference type="InterPro" id="IPR037805">
    <property type="entry name" value="IgV_CD47"/>
</dbReference>
<dbReference type="PANTHER" id="PTHR10613">
    <property type="entry name" value="LEUKOCYTE SURFACE ANTIGEN CD47"/>
    <property type="match status" value="1"/>
</dbReference>
<dbReference type="PANTHER" id="PTHR10613:SF0">
    <property type="entry name" value="LEUKOCYTE SURFACE ANTIGEN CD47"/>
    <property type="match status" value="1"/>
</dbReference>
<dbReference type="Pfam" id="PF04549">
    <property type="entry name" value="CD47"/>
    <property type="match status" value="1"/>
</dbReference>
<dbReference type="Pfam" id="PF08204">
    <property type="entry name" value="V-set_CD47"/>
    <property type="match status" value="1"/>
</dbReference>
<dbReference type="PROSITE" id="PS50835">
    <property type="entry name" value="IG_LIKE"/>
    <property type="match status" value="1"/>
</dbReference>